<evidence type="ECO:0000255" key="1">
    <source>
        <dbReference type="HAMAP-Rule" id="MF_00031"/>
    </source>
</evidence>
<proteinExistence type="inferred from homology"/>
<accession>Q2JWZ2</accession>
<gene>
    <name evidence="1" type="primary">ruvA</name>
    <name type="ordered locus">CYA_0490</name>
</gene>
<reference key="1">
    <citation type="journal article" date="2007" name="ISME J.">
        <title>Population level functional diversity in a microbial community revealed by comparative genomic and metagenomic analyses.</title>
        <authorList>
            <person name="Bhaya D."/>
            <person name="Grossman A.R."/>
            <person name="Steunou A.-S."/>
            <person name="Khuri N."/>
            <person name="Cohan F.M."/>
            <person name="Hamamura N."/>
            <person name="Melendrez M.C."/>
            <person name="Bateson M.M."/>
            <person name="Ward D.M."/>
            <person name="Heidelberg J.F."/>
        </authorList>
    </citation>
    <scope>NUCLEOTIDE SEQUENCE [LARGE SCALE GENOMIC DNA]</scope>
    <source>
        <strain>JA-3-3Ab</strain>
    </source>
</reference>
<name>RUVA_SYNJA</name>
<sequence length="204" mass="22322">MIAFLSGHLVAIEWGERSSLTVEVQGIGYRVKAPARFLKQLPPIGEPVRVFTHLVVRETELVLYGFGSPAERDVFVELIKVSGVGPALGLALLNTFGLPELVQAVVTENVRLLSLTPGVGHKTAQRLALELKTKLAHWRQGLENADRPLAGGPPPAIREEVEMALLALGYSLQEIQAALQALPSQPRPTEEWLRDAITYLSRQP</sequence>
<feature type="chain" id="PRO_1000002579" description="Holliday junction branch migration complex subunit RuvA">
    <location>
        <begin position="1"/>
        <end position="204"/>
    </location>
</feature>
<feature type="region of interest" description="Domain I" evidence="1">
    <location>
        <begin position="1"/>
        <end position="67"/>
    </location>
</feature>
<feature type="region of interest" description="Domain II" evidence="1">
    <location>
        <begin position="68"/>
        <end position="146"/>
    </location>
</feature>
<feature type="region of interest" description="Flexible linker" evidence="1">
    <location>
        <begin position="147"/>
        <end position="156"/>
    </location>
</feature>
<feature type="region of interest" description="Domain III" evidence="1">
    <location>
        <begin position="156"/>
        <end position="204"/>
    </location>
</feature>
<keyword id="KW-0963">Cytoplasm</keyword>
<keyword id="KW-0227">DNA damage</keyword>
<keyword id="KW-0233">DNA recombination</keyword>
<keyword id="KW-0234">DNA repair</keyword>
<keyword id="KW-0238">DNA-binding</keyword>
<organism>
    <name type="scientific">Synechococcus sp. (strain JA-3-3Ab)</name>
    <name type="common">Cyanobacteria bacterium Yellowstone A-Prime</name>
    <dbReference type="NCBI Taxonomy" id="321327"/>
    <lineage>
        <taxon>Bacteria</taxon>
        <taxon>Bacillati</taxon>
        <taxon>Cyanobacteriota</taxon>
        <taxon>Cyanophyceae</taxon>
        <taxon>Synechococcales</taxon>
        <taxon>Synechococcaceae</taxon>
        <taxon>Synechococcus</taxon>
    </lineage>
</organism>
<protein>
    <recommendedName>
        <fullName evidence="1">Holliday junction branch migration complex subunit RuvA</fullName>
    </recommendedName>
</protein>
<comment type="function">
    <text evidence="1">The RuvA-RuvB-RuvC complex processes Holliday junction (HJ) DNA during genetic recombination and DNA repair, while the RuvA-RuvB complex plays an important role in the rescue of blocked DNA replication forks via replication fork reversal (RFR). RuvA specifically binds to HJ cruciform DNA, conferring on it an open structure. The RuvB hexamer acts as an ATP-dependent pump, pulling dsDNA into and through the RuvAB complex. HJ branch migration allows RuvC to scan DNA until it finds its consensus sequence, where it cleaves and resolves the cruciform DNA.</text>
</comment>
<comment type="subunit">
    <text evidence="1">Homotetramer. Forms an RuvA(8)-RuvB(12)-Holliday junction (HJ) complex. HJ DNA is sandwiched between 2 RuvA tetramers; dsDNA enters through RuvA and exits via RuvB. An RuvB hexamer assembles on each DNA strand where it exits the tetramer. Each RuvB hexamer is contacted by two RuvA subunits (via domain III) on 2 adjacent RuvB subunits; this complex drives branch migration. In the full resolvosome a probable DNA-RuvA(4)-RuvB(12)-RuvC(2) complex forms which resolves the HJ.</text>
</comment>
<comment type="subcellular location">
    <subcellularLocation>
        <location evidence="1">Cytoplasm</location>
    </subcellularLocation>
</comment>
<comment type="domain">
    <text evidence="1">Has three domains with a flexible linker between the domains II and III and assumes an 'L' shape. Domain III is highly mobile and contacts RuvB.</text>
</comment>
<comment type="similarity">
    <text evidence="1">Belongs to the RuvA family.</text>
</comment>
<dbReference type="EMBL" id="CP000239">
    <property type="protein sequence ID" value="ABC98708.1"/>
    <property type="molecule type" value="Genomic_DNA"/>
</dbReference>
<dbReference type="RefSeq" id="WP_011429397.1">
    <property type="nucleotide sequence ID" value="NC_007775.1"/>
</dbReference>
<dbReference type="SMR" id="Q2JWZ2"/>
<dbReference type="STRING" id="321327.CYA_0490"/>
<dbReference type="KEGG" id="cya:CYA_0490"/>
<dbReference type="eggNOG" id="COG0632">
    <property type="taxonomic scope" value="Bacteria"/>
</dbReference>
<dbReference type="HOGENOM" id="CLU_087936_0_0_3"/>
<dbReference type="OrthoDB" id="5293449at2"/>
<dbReference type="Proteomes" id="UP000008818">
    <property type="component" value="Chromosome"/>
</dbReference>
<dbReference type="GO" id="GO:0005737">
    <property type="term" value="C:cytoplasm"/>
    <property type="evidence" value="ECO:0007669"/>
    <property type="project" value="UniProtKB-SubCell"/>
</dbReference>
<dbReference type="GO" id="GO:0009379">
    <property type="term" value="C:Holliday junction helicase complex"/>
    <property type="evidence" value="ECO:0007669"/>
    <property type="project" value="InterPro"/>
</dbReference>
<dbReference type="GO" id="GO:0048476">
    <property type="term" value="C:Holliday junction resolvase complex"/>
    <property type="evidence" value="ECO:0007669"/>
    <property type="project" value="UniProtKB-UniRule"/>
</dbReference>
<dbReference type="GO" id="GO:0005524">
    <property type="term" value="F:ATP binding"/>
    <property type="evidence" value="ECO:0007669"/>
    <property type="project" value="InterPro"/>
</dbReference>
<dbReference type="GO" id="GO:0000400">
    <property type="term" value="F:four-way junction DNA binding"/>
    <property type="evidence" value="ECO:0007669"/>
    <property type="project" value="UniProtKB-UniRule"/>
</dbReference>
<dbReference type="GO" id="GO:0009378">
    <property type="term" value="F:four-way junction helicase activity"/>
    <property type="evidence" value="ECO:0007669"/>
    <property type="project" value="InterPro"/>
</dbReference>
<dbReference type="GO" id="GO:0006310">
    <property type="term" value="P:DNA recombination"/>
    <property type="evidence" value="ECO:0007669"/>
    <property type="project" value="UniProtKB-UniRule"/>
</dbReference>
<dbReference type="GO" id="GO:0006281">
    <property type="term" value="P:DNA repair"/>
    <property type="evidence" value="ECO:0007669"/>
    <property type="project" value="UniProtKB-UniRule"/>
</dbReference>
<dbReference type="CDD" id="cd14332">
    <property type="entry name" value="UBA_RuvA_C"/>
    <property type="match status" value="1"/>
</dbReference>
<dbReference type="Gene3D" id="1.10.150.20">
    <property type="entry name" value="5' to 3' exonuclease, C-terminal subdomain"/>
    <property type="match status" value="1"/>
</dbReference>
<dbReference type="Gene3D" id="2.40.50.140">
    <property type="entry name" value="Nucleic acid-binding proteins"/>
    <property type="match status" value="1"/>
</dbReference>
<dbReference type="HAMAP" id="MF_00031">
    <property type="entry name" value="DNA_HJ_migration_RuvA"/>
    <property type="match status" value="1"/>
</dbReference>
<dbReference type="InterPro" id="IPR013849">
    <property type="entry name" value="DNA_helicase_Holl-junc_RuvA_I"/>
</dbReference>
<dbReference type="InterPro" id="IPR012340">
    <property type="entry name" value="NA-bd_OB-fold"/>
</dbReference>
<dbReference type="InterPro" id="IPR000085">
    <property type="entry name" value="RuvA"/>
</dbReference>
<dbReference type="InterPro" id="IPR010994">
    <property type="entry name" value="RuvA_2-like"/>
</dbReference>
<dbReference type="InterPro" id="IPR011114">
    <property type="entry name" value="RuvA_C"/>
</dbReference>
<dbReference type="InterPro" id="IPR036267">
    <property type="entry name" value="RuvA_C_sf"/>
</dbReference>
<dbReference type="NCBIfam" id="TIGR00084">
    <property type="entry name" value="ruvA"/>
    <property type="match status" value="1"/>
</dbReference>
<dbReference type="Pfam" id="PF14520">
    <property type="entry name" value="HHH_5"/>
    <property type="match status" value="1"/>
</dbReference>
<dbReference type="Pfam" id="PF07499">
    <property type="entry name" value="RuvA_C"/>
    <property type="match status" value="1"/>
</dbReference>
<dbReference type="Pfam" id="PF01330">
    <property type="entry name" value="RuvA_N"/>
    <property type="match status" value="1"/>
</dbReference>
<dbReference type="SUPFAM" id="SSF46929">
    <property type="entry name" value="DNA helicase RuvA subunit, C-terminal domain"/>
    <property type="match status" value="1"/>
</dbReference>
<dbReference type="SUPFAM" id="SSF50249">
    <property type="entry name" value="Nucleic acid-binding proteins"/>
    <property type="match status" value="1"/>
</dbReference>
<dbReference type="SUPFAM" id="SSF47781">
    <property type="entry name" value="RuvA domain 2-like"/>
    <property type="match status" value="1"/>
</dbReference>